<evidence type="ECO:0000250" key="1"/>
<evidence type="ECO:0000255" key="2">
    <source>
        <dbReference type="HAMAP-Rule" id="MF_03035"/>
    </source>
</evidence>
<evidence type="ECO:0000305" key="3"/>
<sequence>MADDGGDEKKQVAKFELERETELRFEVEASQTVQMELLTGMAEVFGTELTRNKKFTFDAGAKVAVFTWHGCTVQLSGRTEVAYVSKDTPMLLYLNTHTALEQMRRQAEREDERGPRVMVVGPTDVGKSTVCRLLLNYAVRLGRRPTFVELDVGQGSVSIPGTMGALYIERPADVEEGFSLQAPLVYHFGSTTPGTNIKLYNKITSRLADVFNQRCEVNRRASVSGCVINTCGWVKGSGYQALVHAASAFEVDVVVVLDQERLYNELKRDLPHFVRTVLLPKSGGVVERSKDFRRECRDDRIREYFYGFRGCFYPHAFDVKFSDVKIYKVGAPTIPDSCLPLGMSQEDNQLKLVPVTPGRDMVHHLLSVSMADSPDDNISETSVAGFIVVTGVDLERQVFTVLSPAPRPLPKNFLLIMDIRFMDLK</sequence>
<keyword id="KW-0067">ATP-binding</keyword>
<keyword id="KW-0418">Kinase</keyword>
<keyword id="KW-0507">mRNA processing</keyword>
<keyword id="KW-0547">Nucleotide-binding</keyword>
<keyword id="KW-0539">Nucleus</keyword>
<keyword id="KW-1185">Reference proteome</keyword>
<keyword id="KW-0808">Transferase</keyword>
<keyword id="KW-0819">tRNA processing</keyword>
<protein>
    <recommendedName>
        <fullName evidence="2">Polyribonucleotide 5'-hydroxyl-kinase Clp1</fullName>
        <ecNumber evidence="2">2.7.1.78</ecNumber>
    </recommendedName>
    <alternativeName>
        <fullName evidence="2">Polyadenylation factor Clp1</fullName>
    </alternativeName>
    <alternativeName>
        <fullName evidence="2">Polynucleotide kinase Clp1</fullName>
    </alternativeName>
    <alternativeName>
        <fullName evidence="2">Pre-mRNA cleavage complex II protein Clp1</fullName>
    </alternativeName>
</protein>
<feature type="chain" id="PRO_0000375169" description="Polyribonucleotide 5'-hydroxyl-kinase Clp1">
    <location>
        <begin position="1"/>
        <end position="425"/>
    </location>
</feature>
<feature type="binding site" evidence="2">
    <location>
        <position position="22"/>
    </location>
    <ligand>
        <name>ATP</name>
        <dbReference type="ChEBI" id="CHEBI:30616"/>
    </ligand>
</feature>
<feature type="binding site" evidence="2">
    <location>
        <position position="62"/>
    </location>
    <ligand>
        <name>ATP</name>
        <dbReference type="ChEBI" id="CHEBI:30616"/>
    </ligand>
</feature>
<feature type="binding site" evidence="2">
    <location>
        <begin position="124"/>
        <end position="129"/>
    </location>
    <ligand>
        <name>ATP</name>
        <dbReference type="ChEBI" id="CHEBI:30616"/>
    </ligand>
</feature>
<feature type="sequence conflict" description="In Ref. 2; CAG32079." evidence="3" ref="2">
    <original>M</original>
    <variation>I</variation>
    <location>
        <position position="103"/>
    </location>
</feature>
<reference key="1">
    <citation type="journal article" date="2004" name="Nature">
        <title>Sequence and comparative analysis of the chicken genome provide unique perspectives on vertebrate evolution.</title>
        <authorList>
            <person name="Hillier L.W."/>
            <person name="Miller W."/>
            <person name="Birney E."/>
            <person name="Warren W."/>
            <person name="Hardison R.C."/>
            <person name="Ponting C.P."/>
            <person name="Bork P."/>
            <person name="Burt D.W."/>
            <person name="Groenen M.A.M."/>
            <person name="Delany M.E."/>
            <person name="Dodgson J.B."/>
            <person name="Chinwalla A.T."/>
            <person name="Cliften P.F."/>
            <person name="Clifton S.W."/>
            <person name="Delehaunty K.D."/>
            <person name="Fronick C."/>
            <person name="Fulton R.S."/>
            <person name="Graves T.A."/>
            <person name="Kremitzki C."/>
            <person name="Layman D."/>
            <person name="Magrini V."/>
            <person name="McPherson J.D."/>
            <person name="Miner T.L."/>
            <person name="Minx P."/>
            <person name="Nash W.E."/>
            <person name="Nhan M.N."/>
            <person name="Nelson J.O."/>
            <person name="Oddy L.G."/>
            <person name="Pohl C.S."/>
            <person name="Randall-Maher J."/>
            <person name="Smith S.M."/>
            <person name="Wallis J.W."/>
            <person name="Yang S.-P."/>
            <person name="Romanov M.N."/>
            <person name="Rondelli C.M."/>
            <person name="Paton B."/>
            <person name="Smith J."/>
            <person name="Morrice D."/>
            <person name="Daniels L."/>
            <person name="Tempest H.G."/>
            <person name="Robertson L."/>
            <person name="Masabanda J.S."/>
            <person name="Griffin D.K."/>
            <person name="Vignal A."/>
            <person name="Fillon V."/>
            <person name="Jacobbson L."/>
            <person name="Kerje S."/>
            <person name="Andersson L."/>
            <person name="Crooijmans R.P."/>
            <person name="Aerts J."/>
            <person name="van der Poel J.J."/>
            <person name="Ellegren H."/>
            <person name="Caldwell R.B."/>
            <person name="Hubbard S.J."/>
            <person name="Grafham D.V."/>
            <person name="Kierzek A.M."/>
            <person name="McLaren S.R."/>
            <person name="Overton I.M."/>
            <person name="Arakawa H."/>
            <person name="Beattie K.J."/>
            <person name="Bezzubov Y."/>
            <person name="Boardman P.E."/>
            <person name="Bonfield J.K."/>
            <person name="Croning M.D.R."/>
            <person name="Davies R.M."/>
            <person name="Francis M.D."/>
            <person name="Humphray S.J."/>
            <person name="Scott C.E."/>
            <person name="Taylor R.G."/>
            <person name="Tickle C."/>
            <person name="Brown W.R.A."/>
            <person name="Rogers J."/>
            <person name="Buerstedde J.-M."/>
            <person name="Wilson S.A."/>
            <person name="Stubbs L."/>
            <person name="Ovcharenko I."/>
            <person name="Gordon L."/>
            <person name="Lucas S."/>
            <person name="Miller M.M."/>
            <person name="Inoko H."/>
            <person name="Shiina T."/>
            <person name="Kaufman J."/>
            <person name="Salomonsen J."/>
            <person name="Skjoedt K."/>
            <person name="Wong G.K.-S."/>
            <person name="Wang J."/>
            <person name="Liu B."/>
            <person name="Wang J."/>
            <person name="Yu J."/>
            <person name="Yang H."/>
            <person name="Nefedov M."/>
            <person name="Koriabine M."/>
            <person name="Dejong P.J."/>
            <person name="Goodstadt L."/>
            <person name="Webber C."/>
            <person name="Dickens N.J."/>
            <person name="Letunic I."/>
            <person name="Suyama M."/>
            <person name="Torrents D."/>
            <person name="von Mering C."/>
            <person name="Zdobnov E.M."/>
            <person name="Makova K."/>
            <person name="Nekrutenko A."/>
            <person name="Elnitski L."/>
            <person name="Eswara P."/>
            <person name="King D.C."/>
            <person name="Yang S.-P."/>
            <person name="Tyekucheva S."/>
            <person name="Radakrishnan A."/>
            <person name="Harris R.S."/>
            <person name="Chiaromonte F."/>
            <person name="Taylor J."/>
            <person name="He J."/>
            <person name="Rijnkels M."/>
            <person name="Griffiths-Jones S."/>
            <person name="Ureta-Vidal A."/>
            <person name="Hoffman M.M."/>
            <person name="Severin J."/>
            <person name="Searle S.M.J."/>
            <person name="Law A.S."/>
            <person name="Speed D."/>
            <person name="Waddington D."/>
            <person name="Cheng Z."/>
            <person name="Tuzun E."/>
            <person name="Eichler E."/>
            <person name="Bao Z."/>
            <person name="Flicek P."/>
            <person name="Shteynberg D.D."/>
            <person name="Brent M.R."/>
            <person name="Bye J.M."/>
            <person name="Huckle E.J."/>
            <person name="Chatterji S."/>
            <person name="Dewey C."/>
            <person name="Pachter L."/>
            <person name="Kouranov A."/>
            <person name="Mourelatos Z."/>
            <person name="Hatzigeorgiou A.G."/>
            <person name="Paterson A.H."/>
            <person name="Ivarie R."/>
            <person name="Brandstrom M."/>
            <person name="Axelsson E."/>
            <person name="Backstrom N."/>
            <person name="Berlin S."/>
            <person name="Webster M.T."/>
            <person name="Pourquie O."/>
            <person name="Reymond A."/>
            <person name="Ucla C."/>
            <person name="Antonarakis S.E."/>
            <person name="Long M."/>
            <person name="Emerson J.J."/>
            <person name="Betran E."/>
            <person name="Dupanloup I."/>
            <person name="Kaessmann H."/>
            <person name="Hinrichs A.S."/>
            <person name="Bejerano G."/>
            <person name="Furey T.S."/>
            <person name="Harte R.A."/>
            <person name="Raney B."/>
            <person name="Siepel A."/>
            <person name="Kent W.J."/>
            <person name="Haussler D."/>
            <person name="Eyras E."/>
            <person name="Castelo R."/>
            <person name="Abril J.F."/>
            <person name="Castellano S."/>
            <person name="Camara F."/>
            <person name="Parra G."/>
            <person name="Guigo R."/>
            <person name="Bourque G."/>
            <person name="Tesler G."/>
            <person name="Pevzner P.A."/>
            <person name="Smit A."/>
            <person name="Fulton L.A."/>
            <person name="Mardis E.R."/>
            <person name="Wilson R.K."/>
        </authorList>
    </citation>
    <scope>NUCLEOTIDE SEQUENCE [LARGE SCALE GENOMIC DNA]</scope>
    <source>
        <strain>Red jungle fowl</strain>
    </source>
</reference>
<reference key="2">
    <citation type="journal article" date="2005" name="Genome Biol.">
        <title>Full-length cDNAs from chicken bursal lymphocytes to facilitate gene function analysis.</title>
        <authorList>
            <person name="Caldwell R.B."/>
            <person name="Kierzek A.M."/>
            <person name="Arakawa H."/>
            <person name="Bezzubov Y."/>
            <person name="Zaim J."/>
            <person name="Fiedler P."/>
            <person name="Kutter S."/>
            <person name="Blagodatski A."/>
            <person name="Kostovska D."/>
            <person name="Koter M."/>
            <person name="Plachy J."/>
            <person name="Carninci P."/>
            <person name="Hayashizaki Y."/>
            <person name="Buerstedde J.-M."/>
        </authorList>
    </citation>
    <scope>NUCLEOTIDE SEQUENCE [LARGE SCALE MRNA]</scope>
    <source>
        <strain>CB</strain>
        <tissue>Bursa of Fabricius</tissue>
    </source>
</reference>
<comment type="function">
    <text evidence="1">Polynucleotide kinase that can phosphorylate the 5'-hydroxyl groups of double-stranded RNA (dsRNA), single-stranded RNA (ssRNA), double stranded DNA (dsDNA) and double-stranded DNA:RNA hybrids. dsRNA is phosphorylated more efficiently than dsDNA, and the RNA component of a DNA:RNA hybrid is phosphorylated more efficiently than the DNA component. Plays a role in both tRNA splicing and mRNA 3'-end formation. Component of the tRNA splicing endonuclease complex: phosphorylates the 5'-terminus of the tRNA 3'-exon during tRNA splicing; this phosphorylation event is a prerequisite for the subsequent ligation of the two exon halves and the production of a mature tRNA. Its role in tRNA splicing and maturation is required for cerebellar development. Component of the pre-mRNA cleavage complex II (CF-II), which seems to be required for mRNA 3'-end formation. Also phosphorylates the 5'-terminus of exogenously introduced short interfering RNAs (siRNAs), which is a necessary prerequisite for their incorporation into the RNA-induced silencing complex (RISC). However, endogenous siRNAs and microRNAs (miRNAs) that are produced by the cleavage of dsRNA precursors by dicer1 already contain a 5'-phosphate group, so this protein may be dispensible for normal RNA-mediated gene silencing (By similarity).</text>
</comment>
<comment type="catalytic activity">
    <reaction evidence="2">
        <text>a 5'-end dephospho-2'-deoxyribonucleoside-DNA + ATP = a 5'-end 5'-phospho-2'-deoxyribonucleoside-DNA + ADP + H(+)</text>
        <dbReference type="Rhea" id="RHEA:15669"/>
        <dbReference type="Rhea" id="RHEA-COMP:13180"/>
        <dbReference type="Rhea" id="RHEA-COMP:13184"/>
        <dbReference type="ChEBI" id="CHEBI:15378"/>
        <dbReference type="ChEBI" id="CHEBI:30616"/>
        <dbReference type="ChEBI" id="CHEBI:136412"/>
        <dbReference type="ChEBI" id="CHEBI:136416"/>
        <dbReference type="ChEBI" id="CHEBI:456216"/>
        <dbReference type="EC" id="2.7.1.78"/>
    </reaction>
</comment>
<comment type="catalytic activity">
    <reaction evidence="2">
        <text>a 5'-end dephospho-ribonucleoside-RNA + ATP = a 5'-end 5'-phospho-ribonucleoside-RNA + ADP + H(+)</text>
        <dbReference type="Rhea" id="RHEA:54580"/>
        <dbReference type="Rhea" id="RHEA-COMP:13936"/>
        <dbReference type="Rhea" id="RHEA-COMP:15179"/>
        <dbReference type="ChEBI" id="CHEBI:15378"/>
        <dbReference type="ChEBI" id="CHEBI:30616"/>
        <dbReference type="ChEBI" id="CHEBI:138282"/>
        <dbReference type="ChEBI" id="CHEBI:138284"/>
        <dbReference type="ChEBI" id="CHEBI:456216"/>
        <dbReference type="EC" id="2.7.1.78"/>
    </reaction>
</comment>
<comment type="subunit">
    <text evidence="2">Component of the tRNA splicing endonuclease complex. Component of pre-mRNA cleavage complex II (CF-II).</text>
</comment>
<comment type="subcellular location">
    <subcellularLocation>
        <location evidence="2">Nucleus</location>
    </subcellularLocation>
</comment>
<comment type="similarity">
    <text evidence="2">Belongs to the Clp1 family. Clp1 subfamily.</text>
</comment>
<name>CLP1_CHICK</name>
<gene>
    <name evidence="2" type="primary">CLP1</name>
    <name type="ORF">RCJMB04_17f4</name>
</gene>
<organism>
    <name type="scientific">Gallus gallus</name>
    <name type="common">Chicken</name>
    <dbReference type="NCBI Taxonomy" id="9031"/>
    <lineage>
        <taxon>Eukaryota</taxon>
        <taxon>Metazoa</taxon>
        <taxon>Chordata</taxon>
        <taxon>Craniata</taxon>
        <taxon>Vertebrata</taxon>
        <taxon>Euteleostomi</taxon>
        <taxon>Archelosauria</taxon>
        <taxon>Archosauria</taxon>
        <taxon>Dinosauria</taxon>
        <taxon>Saurischia</taxon>
        <taxon>Theropoda</taxon>
        <taxon>Coelurosauria</taxon>
        <taxon>Aves</taxon>
        <taxon>Neognathae</taxon>
        <taxon>Galloanserae</taxon>
        <taxon>Galliformes</taxon>
        <taxon>Phasianidae</taxon>
        <taxon>Phasianinae</taxon>
        <taxon>Gallus</taxon>
    </lineage>
</organism>
<accession>Q5ZJL4</accession>
<accession>F1NA64</accession>
<dbReference type="EC" id="2.7.1.78" evidence="2"/>
<dbReference type="EMBL" id="AADN03004636">
    <property type="status" value="NOT_ANNOTATED_CDS"/>
    <property type="molecule type" value="Genomic_DNA"/>
</dbReference>
<dbReference type="EMBL" id="AJ720420">
    <property type="protein sequence ID" value="CAG32079.1"/>
    <property type="molecule type" value="mRNA"/>
</dbReference>
<dbReference type="RefSeq" id="NP_001012292.2">
    <property type="nucleotide sequence ID" value="NM_001012292.2"/>
</dbReference>
<dbReference type="SMR" id="Q5ZJL4"/>
<dbReference type="FunCoup" id="Q5ZJL4">
    <property type="interactions" value="2069"/>
</dbReference>
<dbReference type="STRING" id="9031.ENSGALP00000011907"/>
<dbReference type="GlyGen" id="Q5ZJL4">
    <property type="glycosylation" value="2 sites"/>
</dbReference>
<dbReference type="PaxDb" id="9031-ENSGALP00000011907"/>
<dbReference type="Ensembl" id="ENSGALT00010063863.1">
    <property type="protein sequence ID" value="ENSGALP00010039366.1"/>
    <property type="gene ID" value="ENSGALG00010026244.1"/>
</dbReference>
<dbReference type="GeneID" id="423131"/>
<dbReference type="KEGG" id="gga:423131"/>
<dbReference type="CTD" id="10978"/>
<dbReference type="VEuPathDB" id="HostDB:geneid_423131"/>
<dbReference type="eggNOG" id="KOG2749">
    <property type="taxonomic scope" value="Eukaryota"/>
</dbReference>
<dbReference type="GeneTree" id="ENSGT00940000153668"/>
<dbReference type="HOGENOM" id="CLU_018195_1_0_1"/>
<dbReference type="InParanoid" id="Q5ZJL4"/>
<dbReference type="OMA" id="VQYVNCH"/>
<dbReference type="OrthoDB" id="258143at2759"/>
<dbReference type="PhylomeDB" id="Q5ZJL4"/>
<dbReference type="TreeFam" id="TF105795"/>
<dbReference type="Reactome" id="R-GGA-72187">
    <property type="pathway name" value="mRNA 3'-end processing"/>
</dbReference>
<dbReference type="Reactome" id="R-GGA-73856">
    <property type="pathway name" value="RNA Polymerase II Transcription Termination"/>
</dbReference>
<dbReference type="Reactome" id="R-GGA-77595">
    <property type="pathway name" value="Processing of Intronless Pre-mRNAs"/>
</dbReference>
<dbReference type="PRO" id="PR:Q5ZJL4"/>
<dbReference type="Proteomes" id="UP000000539">
    <property type="component" value="Chromosome 5"/>
</dbReference>
<dbReference type="Bgee" id="ENSGALG00000007370">
    <property type="expression patterns" value="Expressed in granulocyte and 12 other cell types or tissues"/>
</dbReference>
<dbReference type="GO" id="GO:0005829">
    <property type="term" value="C:cytosol"/>
    <property type="evidence" value="ECO:0007669"/>
    <property type="project" value="Ensembl"/>
</dbReference>
<dbReference type="GO" id="GO:0005849">
    <property type="term" value="C:mRNA cleavage factor complex"/>
    <property type="evidence" value="ECO:0007669"/>
    <property type="project" value="UniProtKB-UniRule"/>
</dbReference>
<dbReference type="GO" id="GO:0005654">
    <property type="term" value="C:nucleoplasm"/>
    <property type="evidence" value="ECO:0007669"/>
    <property type="project" value="Ensembl"/>
</dbReference>
<dbReference type="GO" id="GO:0005634">
    <property type="term" value="C:nucleus"/>
    <property type="evidence" value="ECO:0000318"/>
    <property type="project" value="GO_Central"/>
</dbReference>
<dbReference type="GO" id="GO:0000214">
    <property type="term" value="C:tRNA-intron endonuclease complex"/>
    <property type="evidence" value="ECO:0000250"/>
    <property type="project" value="UniProtKB"/>
</dbReference>
<dbReference type="GO" id="GO:0005524">
    <property type="term" value="F:ATP binding"/>
    <property type="evidence" value="ECO:0007669"/>
    <property type="project" value="UniProtKB-UniRule"/>
</dbReference>
<dbReference type="GO" id="GO:0046404">
    <property type="term" value="F:ATP-dependent polydeoxyribonucleotide 5'-hydroxyl-kinase activity"/>
    <property type="evidence" value="ECO:0007669"/>
    <property type="project" value="UniProtKB-UniRule"/>
</dbReference>
<dbReference type="GO" id="GO:0051736">
    <property type="term" value="F:ATP-dependent polyribonucleotide 5'-hydroxyl-kinase activity"/>
    <property type="evidence" value="ECO:0007669"/>
    <property type="project" value="UniProtKB-UniRule"/>
</dbReference>
<dbReference type="GO" id="GO:0051731">
    <property type="term" value="F:polynucleotide 5'-hydroxyl-kinase activity"/>
    <property type="evidence" value="ECO:0000318"/>
    <property type="project" value="GO_Central"/>
</dbReference>
<dbReference type="GO" id="GO:0021695">
    <property type="term" value="P:cerebellar cortex development"/>
    <property type="evidence" value="ECO:0000250"/>
    <property type="project" value="UniProtKB"/>
</dbReference>
<dbReference type="GO" id="GO:0098795">
    <property type="term" value="P:global gene silencing by mRNA cleavage"/>
    <property type="evidence" value="ECO:0000250"/>
    <property type="project" value="UniProtKB"/>
</dbReference>
<dbReference type="GO" id="GO:0031124">
    <property type="term" value="P:mRNA 3'-end processing"/>
    <property type="evidence" value="ECO:0007669"/>
    <property type="project" value="UniProtKB-UniRule"/>
</dbReference>
<dbReference type="GO" id="GO:0070922">
    <property type="term" value="P:RISC complex assembly"/>
    <property type="evidence" value="ECO:0000250"/>
    <property type="project" value="UniProtKB"/>
</dbReference>
<dbReference type="GO" id="GO:0006388">
    <property type="term" value="P:tRNA splicing, via endonucleolytic cleavage and ligation"/>
    <property type="evidence" value="ECO:0000250"/>
    <property type="project" value="UniProtKB"/>
</dbReference>
<dbReference type="FunFam" id="2.40.30.330:FF:000001">
    <property type="entry name" value="Protein CLP1 homolog"/>
    <property type="match status" value="1"/>
</dbReference>
<dbReference type="FunFam" id="3.40.50.300:FF:000454">
    <property type="entry name" value="Protein CLP1 homolog"/>
    <property type="match status" value="1"/>
</dbReference>
<dbReference type="FunFam" id="2.60.120.1030:FF:000001">
    <property type="entry name" value="Protein CLP1 homolog 5"/>
    <property type="match status" value="1"/>
</dbReference>
<dbReference type="Gene3D" id="2.60.120.1030">
    <property type="entry name" value="Clp1, DNA binding domain"/>
    <property type="match status" value="1"/>
</dbReference>
<dbReference type="Gene3D" id="3.40.50.300">
    <property type="entry name" value="P-loop containing nucleotide triphosphate hydrolases"/>
    <property type="match status" value="1"/>
</dbReference>
<dbReference type="Gene3D" id="2.40.30.330">
    <property type="entry name" value="Pre-mRNA cleavage complex subunit Clp1, C-terminal domain"/>
    <property type="match status" value="1"/>
</dbReference>
<dbReference type="HAMAP" id="MF_03035">
    <property type="entry name" value="Clp1"/>
    <property type="match status" value="1"/>
</dbReference>
<dbReference type="InterPro" id="IPR028606">
    <property type="entry name" value="Clp1"/>
</dbReference>
<dbReference type="InterPro" id="IPR045116">
    <property type="entry name" value="Clp1/Grc3"/>
</dbReference>
<dbReference type="InterPro" id="IPR010655">
    <property type="entry name" value="Clp1_C"/>
</dbReference>
<dbReference type="InterPro" id="IPR038238">
    <property type="entry name" value="Clp1_C_sf"/>
</dbReference>
<dbReference type="InterPro" id="IPR032324">
    <property type="entry name" value="Clp1_N"/>
</dbReference>
<dbReference type="InterPro" id="IPR038239">
    <property type="entry name" value="Clp1_N_sf"/>
</dbReference>
<dbReference type="InterPro" id="IPR032319">
    <property type="entry name" value="CLP1_P"/>
</dbReference>
<dbReference type="InterPro" id="IPR027417">
    <property type="entry name" value="P-loop_NTPase"/>
</dbReference>
<dbReference type="PANTHER" id="PTHR12755">
    <property type="entry name" value="CLEAVAGE/POLYADENYLATION FACTOR IA SUBUNIT CLP1P"/>
    <property type="match status" value="1"/>
</dbReference>
<dbReference type="PANTHER" id="PTHR12755:SF6">
    <property type="entry name" value="POLYRIBONUCLEOTIDE 5'-HYDROXYL-KINASE CLP1"/>
    <property type="match status" value="1"/>
</dbReference>
<dbReference type="Pfam" id="PF06807">
    <property type="entry name" value="Clp1"/>
    <property type="match status" value="1"/>
</dbReference>
<dbReference type="Pfam" id="PF16573">
    <property type="entry name" value="CLP1_N"/>
    <property type="match status" value="1"/>
</dbReference>
<dbReference type="Pfam" id="PF16575">
    <property type="entry name" value="CLP1_P"/>
    <property type="match status" value="1"/>
</dbReference>
<dbReference type="SUPFAM" id="SSF52540">
    <property type="entry name" value="P-loop containing nucleoside triphosphate hydrolases"/>
    <property type="match status" value="2"/>
</dbReference>
<proteinExistence type="evidence at transcript level"/>